<proteinExistence type="inferred from homology"/>
<dbReference type="EC" id="2.5.1.61" evidence="1"/>
<dbReference type="EMBL" id="AM746676">
    <property type="protein sequence ID" value="CAN91783.1"/>
    <property type="molecule type" value="Genomic_DNA"/>
</dbReference>
<dbReference type="RefSeq" id="WP_012234260.1">
    <property type="nucleotide sequence ID" value="NC_010162.1"/>
</dbReference>
<dbReference type="SMR" id="A9FDP9"/>
<dbReference type="STRING" id="448385.sce1625"/>
<dbReference type="KEGG" id="scl:sce1625"/>
<dbReference type="eggNOG" id="COG0181">
    <property type="taxonomic scope" value="Bacteria"/>
</dbReference>
<dbReference type="HOGENOM" id="CLU_019704_0_2_7"/>
<dbReference type="OrthoDB" id="9810298at2"/>
<dbReference type="BioCyc" id="SCEL448385:SCE_RS08375-MONOMER"/>
<dbReference type="UniPathway" id="UPA00251">
    <property type="reaction ID" value="UER00319"/>
</dbReference>
<dbReference type="Proteomes" id="UP000002139">
    <property type="component" value="Chromosome"/>
</dbReference>
<dbReference type="GO" id="GO:0005737">
    <property type="term" value="C:cytoplasm"/>
    <property type="evidence" value="ECO:0007669"/>
    <property type="project" value="TreeGrafter"/>
</dbReference>
<dbReference type="GO" id="GO:0004418">
    <property type="term" value="F:hydroxymethylbilane synthase activity"/>
    <property type="evidence" value="ECO:0007669"/>
    <property type="project" value="UniProtKB-UniRule"/>
</dbReference>
<dbReference type="GO" id="GO:0006782">
    <property type="term" value="P:protoporphyrinogen IX biosynthetic process"/>
    <property type="evidence" value="ECO:0007669"/>
    <property type="project" value="UniProtKB-UniRule"/>
</dbReference>
<dbReference type="FunFam" id="3.40.190.10:FF:000005">
    <property type="entry name" value="Porphobilinogen deaminase"/>
    <property type="match status" value="1"/>
</dbReference>
<dbReference type="Gene3D" id="3.40.190.10">
    <property type="entry name" value="Periplasmic binding protein-like II"/>
    <property type="match status" value="2"/>
</dbReference>
<dbReference type="Gene3D" id="3.30.160.40">
    <property type="entry name" value="Porphobilinogen deaminase, C-terminal domain"/>
    <property type="match status" value="1"/>
</dbReference>
<dbReference type="HAMAP" id="MF_00260">
    <property type="entry name" value="Porphobil_deam"/>
    <property type="match status" value="1"/>
</dbReference>
<dbReference type="InterPro" id="IPR000860">
    <property type="entry name" value="HemC"/>
</dbReference>
<dbReference type="InterPro" id="IPR022419">
    <property type="entry name" value="Porphobilin_deaminase_cofac_BS"/>
</dbReference>
<dbReference type="InterPro" id="IPR022417">
    <property type="entry name" value="Porphobilin_deaminase_N"/>
</dbReference>
<dbReference type="InterPro" id="IPR022418">
    <property type="entry name" value="Porphobilinogen_deaminase_C"/>
</dbReference>
<dbReference type="InterPro" id="IPR036803">
    <property type="entry name" value="Porphobilinogen_deaminase_C_sf"/>
</dbReference>
<dbReference type="NCBIfam" id="TIGR00212">
    <property type="entry name" value="hemC"/>
    <property type="match status" value="1"/>
</dbReference>
<dbReference type="PANTHER" id="PTHR11557">
    <property type="entry name" value="PORPHOBILINOGEN DEAMINASE"/>
    <property type="match status" value="1"/>
</dbReference>
<dbReference type="PANTHER" id="PTHR11557:SF0">
    <property type="entry name" value="PORPHOBILINOGEN DEAMINASE"/>
    <property type="match status" value="1"/>
</dbReference>
<dbReference type="Pfam" id="PF01379">
    <property type="entry name" value="Porphobil_deam"/>
    <property type="match status" value="1"/>
</dbReference>
<dbReference type="Pfam" id="PF03900">
    <property type="entry name" value="Porphobil_deamC"/>
    <property type="match status" value="1"/>
</dbReference>
<dbReference type="PIRSF" id="PIRSF001438">
    <property type="entry name" value="4pyrrol_synth_OHMeBilane_synth"/>
    <property type="match status" value="1"/>
</dbReference>
<dbReference type="PRINTS" id="PR00151">
    <property type="entry name" value="PORPHBDMNASE"/>
</dbReference>
<dbReference type="SUPFAM" id="SSF53850">
    <property type="entry name" value="Periplasmic binding protein-like II"/>
    <property type="match status" value="1"/>
</dbReference>
<dbReference type="SUPFAM" id="SSF54782">
    <property type="entry name" value="Porphobilinogen deaminase (hydroxymethylbilane synthase), C-terminal domain"/>
    <property type="match status" value="1"/>
</dbReference>
<dbReference type="PROSITE" id="PS00533">
    <property type="entry name" value="PORPHOBILINOGEN_DEAM"/>
    <property type="match status" value="1"/>
</dbReference>
<keyword id="KW-0627">Porphyrin biosynthesis</keyword>
<keyword id="KW-1185">Reference proteome</keyword>
<keyword id="KW-0808">Transferase</keyword>
<evidence type="ECO:0000255" key="1">
    <source>
        <dbReference type="HAMAP-Rule" id="MF_00260"/>
    </source>
</evidence>
<reference key="1">
    <citation type="journal article" date="2007" name="Nat. Biotechnol.">
        <title>Complete genome sequence of the myxobacterium Sorangium cellulosum.</title>
        <authorList>
            <person name="Schneiker S."/>
            <person name="Perlova O."/>
            <person name="Kaiser O."/>
            <person name="Gerth K."/>
            <person name="Alici A."/>
            <person name="Altmeyer M.O."/>
            <person name="Bartels D."/>
            <person name="Bekel T."/>
            <person name="Beyer S."/>
            <person name="Bode E."/>
            <person name="Bode H.B."/>
            <person name="Bolten C.J."/>
            <person name="Choudhuri J.V."/>
            <person name="Doss S."/>
            <person name="Elnakady Y.A."/>
            <person name="Frank B."/>
            <person name="Gaigalat L."/>
            <person name="Goesmann A."/>
            <person name="Groeger C."/>
            <person name="Gross F."/>
            <person name="Jelsbak L."/>
            <person name="Jelsbak L."/>
            <person name="Kalinowski J."/>
            <person name="Kegler C."/>
            <person name="Knauber T."/>
            <person name="Konietzny S."/>
            <person name="Kopp M."/>
            <person name="Krause L."/>
            <person name="Krug D."/>
            <person name="Linke B."/>
            <person name="Mahmud T."/>
            <person name="Martinez-Arias R."/>
            <person name="McHardy A.C."/>
            <person name="Merai M."/>
            <person name="Meyer F."/>
            <person name="Mormann S."/>
            <person name="Munoz-Dorado J."/>
            <person name="Perez J."/>
            <person name="Pradella S."/>
            <person name="Rachid S."/>
            <person name="Raddatz G."/>
            <person name="Rosenau F."/>
            <person name="Rueckert C."/>
            <person name="Sasse F."/>
            <person name="Scharfe M."/>
            <person name="Schuster S.C."/>
            <person name="Suen G."/>
            <person name="Treuner-Lange A."/>
            <person name="Velicer G.J."/>
            <person name="Vorholter F.-J."/>
            <person name="Weissman K.J."/>
            <person name="Welch R.D."/>
            <person name="Wenzel S.C."/>
            <person name="Whitworth D.E."/>
            <person name="Wilhelm S."/>
            <person name="Wittmann C."/>
            <person name="Bloecker H."/>
            <person name="Puehler A."/>
            <person name="Mueller R."/>
        </authorList>
    </citation>
    <scope>NUCLEOTIDE SEQUENCE [LARGE SCALE GENOMIC DNA]</scope>
    <source>
        <strain>So ce56</strain>
    </source>
</reference>
<protein>
    <recommendedName>
        <fullName evidence="1">Porphobilinogen deaminase</fullName>
        <shortName evidence="1">PBG</shortName>
        <ecNumber evidence="1">2.5.1.61</ecNumber>
    </recommendedName>
    <alternativeName>
        <fullName evidence="1">Hydroxymethylbilane synthase</fullName>
        <shortName evidence="1">HMBS</shortName>
    </alternativeName>
    <alternativeName>
        <fullName evidence="1">Pre-uroporphyrinogen synthase</fullName>
    </alternativeName>
</protein>
<sequence length="300" mass="31913">MPTELTLATRRSALALAQSRAFARSLEAAVPDLSLRELEVVTSGDKTQDRSLQDIGGKGLFIKELEEALLDRRADFAVHSIKDVPAEIAPALCLACIPAREDPRDALVTRSGALLAELPAGARVGTSSLRRAVALREARPDLVIEPVRGNVDTRLRKVFDGVFDAVVLALAGLKRLGLEARATEVLSPEVSLPAIGQGALGIECRTADDSVRDVLGTLADAETTICVSAERAVMAAVEGSCRTPVAAYAVRDGGALWLRALLAEPDGSRLRRAERRLSWPGNTREAERLGADLGAELKKG</sequence>
<feature type="chain" id="PRO_1000078625" description="Porphobilinogen deaminase">
    <location>
        <begin position="1"/>
        <end position="300"/>
    </location>
</feature>
<feature type="modified residue" description="S-(dipyrrolylmethanemethyl)cysteine" evidence="1">
    <location>
        <position position="241"/>
    </location>
</feature>
<name>HEM3_SORC5</name>
<accession>A9FDP9</accession>
<organism>
    <name type="scientific">Sorangium cellulosum (strain So ce56)</name>
    <name type="common">Polyangium cellulosum (strain So ce56)</name>
    <dbReference type="NCBI Taxonomy" id="448385"/>
    <lineage>
        <taxon>Bacteria</taxon>
        <taxon>Pseudomonadati</taxon>
        <taxon>Myxococcota</taxon>
        <taxon>Polyangia</taxon>
        <taxon>Polyangiales</taxon>
        <taxon>Polyangiaceae</taxon>
        <taxon>Sorangium</taxon>
    </lineage>
</organism>
<gene>
    <name evidence="1" type="primary">hemC</name>
    <name type="ordered locus">sce1625</name>
</gene>
<comment type="function">
    <text evidence="1">Tetrapolymerization of the monopyrrole PBG into the hydroxymethylbilane pre-uroporphyrinogen in several discrete steps.</text>
</comment>
<comment type="catalytic activity">
    <reaction evidence="1">
        <text>4 porphobilinogen + H2O = hydroxymethylbilane + 4 NH4(+)</text>
        <dbReference type="Rhea" id="RHEA:13185"/>
        <dbReference type="ChEBI" id="CHEBI:15377"/>
        <dbReference type="ChEBI" id="CHEBI:28938"/>
        <dbReference type="ChEBI" id="CHEBI:57845"/>
        <dbReference type="ChEBI" id="CHEBI:58126"/>
        <dbReference type="EC" id="2.5.1.61"/>
    </reaction>
</comment>
<comment type="cofactor">
    <cofactor evidence="1">
        <name>dipyrromethane</name>
        <dbReference type="ChEBI" id="CHEBI:60342"/>
    </cofactor>
    <text evidence="1">Binds 1 dipyrromethane group covalently.</text>
</comment>
<comment type="pathway">
    <text evidence="1">Porphyrin-containing compound metabolism; protoporphyrin-IX biosynthesis; coproporphyrinogen-III from 5-aminolevulinate: step 2/4.</text>
</comment>
<comment type="subunit">
    <text evidence="1">Monomer.</text>
</comment>
<comment type="miscellaneous">
    <text evidence="1">The porphobilinogen subunits are added to the dipyrromethane group.</text>
</comment>
<comment type="similarity">
    <text evidence="1">Belongs to the HMBS family.</text>
</comment>